<organism>
    <name type="scientific">Cryptococcus deuterogattii (strain R265)</name>
    <name type="common">Cryptococcus gattii VGII (strain R265)</name>
    <dbReference type="NCBI Taxonomy" id="294750"/>
    <lineage>
        <taxon>Eukaryota</taxon>
        <taxon>Fungi</taxon>
        <taxon>Dikarya</taxon>
        <taxon>Basidiomycota</taxon>
        <taxon>Agaricomycotina</taxon>
        <taxon>Tremellomycetes</taxon>
        <taxon>Tremellales</taxon>
        <taxon>Cryptococcaceae</taxon>
        <taxon>Cryptococcus</taxon>
        <taxon>Cryptococcus gattii species complex</taxon>
    </lineage>
</organism>
<dbReference type="EMBL" id="CP025772">
    <property type="protein sequence ID" value="KGB80250.2"/>
    <property type="molecule type" value="Genomic_DNA"/>
</dbReference>
<dbReference type="SMR" id="P9WEU3"/>
<dbReference type="GlyCosmos" id="P9WEU3">
    <property type="glycosylation" value="4 sites, No reported glycans"/>
</dbReference>
<dbReference type="VEuPathDB" id="FungiDB:CNBG_6088"/>
<dbReference type="Proteomes" id="UP000029445">
    <property type="component" value="Chromosome 14"/>
</dbReference>
<dbReference type="GO" id="GO:0005886">
    <property type="term" value="C:plasma membrane"/>
    <property type="evidence" value="ECO:0007669"/>
    <property type="project" value="UniProtKB-SubCell"/>
</dbReference>
<dbReference type="GO" id="GO:0140359">
    <property type="term" value="F:ABC-type transporter activity"/>
    <property type="evidence" value="ECO:0007669"/>
    <property type="project" value="InterPro"/>
</dbReference>
<dbReference type="GO" id="GO:0005524">
    <property type="term" value="F:ATP binding"/>
    <property type="evidence" value="ECO:0007669"/>
    <property type="project" value="UniProtKB-KW"/>
</dbReference>
<dbReference type="GO" id="GO:0016887">
    <property type="term" value="F:ATP hydrolysis activity"/>
    <property type="evidence" value="ECO:0007669"/>
    <property type="project" value="InterPro"/>
</dbReference>
<dbReference type="CDD" id="cd03233">
    <property type="entry name" value="ABCG_PDR_domain1"/>
    <property type="match status" value="1"/>
</dbReference>
<dbReference type="CDD" id="cd03232">
    <property type="entry name" value="ABCG_PDR_domain2"/>
    <property type="match status" value="1"/>
</dbReference>
<dbReference type="FunFam" id="3.40.50.300:FF:000054">
    <property type="entry name" value="ABC multidrug transporter atrF"/>
    <property type="match status" value="1"/>
</dbReference>
<dbReference type="Gene3D" id="3.40.50.300">
    <property type="entry name" value="P-loop containing nucleotide triphosphate hydrolases"/>
    <property type="match status" value="2"/>
</dbReference>
<dbReference type="InterPro" id="IPR003593">
    <property type="entry name" value="AAA+_ATPase"/>
</dbReference>
<dbReference type="InterPro" id="IPR013525">
    <property type="entry name" value="ABC2_TM"/>
</dbReference>
<dbReference type="InterPro" id="IPR029481">
    <property type="entry name" value="ABC_trans_N"/>
</dbReference>
<dbReference type="InterPro" id="IPR003439">
    <property type="entry name" value="ABC_transporter-like_ATP-bd"/>
</dbReference>
<dbReference type="InterPro" id="IPR017871">
    <property type="entry name" value="ABC_transporter-like_CS"/>
</dbReference>
<dbReference type="InterPro" id="IPR034001">
    <property type="entry name" value="ABCG_PDR_1"/>
</dbReference>
<dbReference type="InterPro" id="IPR034003">
    <property type="entry name" value="ABCG_PDR_2"/>
</dbReference>
<dbReference type="InterPro" id="IPR027417">
    <property type="entry name" value="P-loop_NTPase"/>
</dbReference>
<dbReference type="InterPro" id="IPR010929">
    <property type="entry name" value="PDR_CDR_ABC"/>
</dbReference>
<dbReference type="PANTHER" id="PTHR19241">
    <property type="entry name" value="ATP-BINDING CASSETTE TRANSPORTER"/>
    <property type="match status" value="1"/>
</dbReference>
<dbReference type="Pfam" id="PF01061">
    <property type="entry name" value="ABC2_membrane"/>
    <property type="match status" value="2"/>
</dbReference>
<dbReference type="Pfam" id="PF00005">
    <property type="entry name" value="ABC_tran"/>
    <property type="match status" value="2"/>
</dbReference>
<dbReference type="Pfam" id="PF14510">
    <property type="entry name" value="ABC_trans_N"/>
    <property type="match status" value="1"/>
</dbReference>
<dbReference type="Pfam" id="PF06422">
    <property type="entry name" value="PDR_CDR"/>
    <property type="match status" value="1"/>
</dbReference>
<dbReference type="SMART" id="SM00382">
    <property type="entry name" value="AAA"/>
    <property type="match status" value="2"/>
</dbReference>
<dbReference type="SUPFAM" id="SSF52540">
    <property type="entry name" value="P-loop containing nucleoside triphosphate hydrolases"/>
    <property type="match status" value="2"/>
</dbReference>
<dbReference type="PROSITE" id="PS00211">
    <property type="entry name" value="ABC_TRANSPORTER_1"/>
    <property type="match status" value="1"/>
</dbReference>
<dbReference type="PROSITE" id="PS50893">
    <property type="entry name" value="ABC_TRANSPORTER_2"/>
    <property type="match status" value="2"/>
</dbReference>
<accession>P9WEU3</accession>
<protein>
    <recommendedName>
        <fullName evidence="7">ABC multidrug transporter AFR2</fullName>
    </recommendedName>
</protein>
<sequence length="1529" mass="170343">MAFAGVGQGIGTYDRTEQASGAPLGRVTSRAHFTDIHPSDDLPAQTEENRAREVGHLARQLTRQSVTVTDDSTDVFSYQEGSDLDPFSDKFNAKKWTKLMFEAVQTCGPARKAGLSFRNLGVHGFGSDADYQKTVGNLPLVGIGSLRDLIGNRKRKVQILNSMDGVLEAGEMLVVLGPPGSGCTTMLKTIAGEMNGIYLDESSSLNYRGITPKEIYGQFRGEAIYTAEVDIHFPNLTVGQTLSFAAEARAPRNPPGGISKKEYAKHMRDVVMSVFGISHTLNTIVGNDFVRGVSGGERKRVTIAEASLAGAPLQCWDNSTRGLDSANAIEFCKNLRLNADYMGISSAVAIYQAPQSAYDCFDKVSVLYEGEQIFFGKTTDAKQFFVDMGFHCPSQQTVPDFLTSLTSPSERRPREGFEGKVPTTPQEFAARWKQSDKYQELLAQIAEFENKYPVHGEKYREFLESRRAQQSKHLRSKSPYTLSYGGQVELCLRRGFDRLRADPSLTLTQLFGNFIMALIIGSVFYNLPVTTSSFYSRGALLFFAILMSAFGSALEILILYAQRGIVEKHSRYAFYHPSAEAVASALTDIPYKVMNCIIFNLTLYFMTNLRREPGAYFFFMLISFTLTMVMSMLFRSIASLSRSLTQALAPAALLILGLVMYTGFAVNVANMRGWARWMNWLDPIAYGFESLMINEFHGREYECSTFVPMGPGYEDATGQQHVCSTAGAVAGSSVVNGDAYINLSYEYYHAHKWRNFGILIGFFLFFTAIYLTATEFITAKKSKGEILVFPRGKIPHALLAQSTHSHGSSDDVEGGKFAGGSNMKKEITGADRANAGIIQKQTAIFSWKDVVYDIKIKKEPRRILDHVDGWVKPGTLTALMGVSGAGKTTLLDVLATRVTMGVVTGEMLVDGKQRDLSFQRKTGYVQQQDLHLETSTVREALRFSAILRQPNTVSIKEKYEYVEEVLKLLEMDGYADAVVGVPGTGLNVEQRKRLTIGVELVAKPALLLFLDEPTSGLDSQTSWNILLLLRKLTEHGQAILCTIHQPSAMLFEQFDRLLFLARGGKTVYFGEVGKGSRILIDYFEKNGASKCPEGENPAEWMLAAIGAAPGSHSEVDWHQTWINSPERIEVRSELARIKETQGGKGEAALQNKDYEKSKAEVKAEYAEFASPLWKQFIVVLMRVWQQHWRTPSYIWAKVALCSLSGLFIGFSFFKAGTSQQGLQNQLFSVFMMFTIFGQLTQQIMPNFVTQRSLYEVRERPSKTYSWKIFILSNIVSEIPWAILMGVIIYFTWYYPIGYYRNAIPEDAVHLRGALMFLYIEMFLLFNATFSIMIVAGIATAETAGNIANLLFSMCLIFCGVLASGSSLPGFWVFMYRVSPFTYLVEGMLSVAVANTDVVCSDIEFLTFNPPSGQSCGDYMSTFITNYGGYLVDENATTACEFCSMSKTNTFLAQFDIYYSNKWRDFGLLWVYVVFNVIAAIGIYWLARVPKNTGKERASEPEDVQEKQVPAQSTEKKYQSISRSSESTVA</sequence>
<comment type="function">
    <text evidence="5 6">Pleiotropic ABC efflux transporter that confers resistance to structurally and functionally unrelated compounds including azoles such as fluconazole (FLC), itraconazole (ITC), posaconazole (POS), and voriconazole (VRC).</text>
</comment>
<comment type="catalytic activity">
    <reaction evidence="5">
        <text>itraconazole(in) + ATP + H2O = itraconazole(out) + ADP + phosphate + H(+)</text>
        <dbReference type="Rhea" id="RHEA:33503"/>
        <dbReference type="ChEBI" id="CHEBI:6076"/>
        <dbReference type="ChEBI" id="CHEBI:15377"/>
        <dbReference type="ChEBI" id="CHEBI:15378"/>
        <dbReference type="ChEBI" id="CHEBI:30616"/>
        <dbReference type="ChEBI" id="CHEBI:43474"/>
        <dbReference type="ChEBI" id="CHEBI:456216"/>
    </reaction>
    <physiologicalReaction direction="left-to-right" evidence="5">
        <dbReference type="Rhea" id="RHEA:33504"/>
    </physiologicalReaction>
</comment>
<comment type="catalytic activity">
    <reaction evidence="5">
        <text>voriconazole(in) + ATP + H2O = voriconazole(out) + ADP + phosphate + H(+)</text>
        <dbReference type="Rhea" id="RHEA:61912"/>
        <dbReference type="ChEBI" id="CHEBI:10023"/>
        <dbReference type="ChEBI" id="CHEBI:15377"/>
        <dbReference type="ChEBI" id="CHEBI:15378"/>
        <dbReference type="ChEBI" id="CHEBI:30616"/>
        <dbReference type="ChEBI" id="CHEBI:43474"/>
        <dbReference type="ChEBI" id="CHEBI:456216"/>
    </reaction>
    <physiologicalReaction direction="left-to-right" evidence="5">
        <dbReference type="Rhea" id="RHEA:61913"/>
    </physiologicalReaction>
</comment>
<comment type="catalytic activity">
    <reaction evidence="5">
        <text>fluconazole(in) + ATP + H2O = fluconazole(out) + ADP + phosphate + H(+)</text>
        <dbReference type="Rhea" id="RHEA:61916"/>
        <dbReference type="ChEBI" id="CHEBI:15377"/>
        <dbReference type="ChEBI" id="CHEBI:15378"/>
        <dbReference type="ChEBI" id="CHEBI:30616"/>
        <dbReference type="ChEBI" id="CHEBI:43474"/>
        <dbReference type="ChEBI" id="CHEBI:46081"/>
        <dbReference type="ChEBI" id="CHEBI:456216"/>
    </reaction>
    <physiologicalReaction direction="left-to-right" evidence="5">
        <dbReference type="Rhea" id="RHEA:61917"/>
    </physiologicalReaction>
</comment>
<comment type="biophysicochemical properties">
    <kinetics>
        <KM evidence="5">0.36 uM for fluconazole transport</KM>
        <Vmax evidence="5">33.98 pmol/min/mg enzyme for fluconazole transport</Vmax>
    </kinetics>
</comment>
<comment type="subcellular location">
    <subcellularLocation>
        <location evidence="5">Cell membrane</location>
        <topology evidence="1">Multi-pass membrane protein</topology>
    </subcellularLocation>
</comment>
<comment type="induction">
    <text evidence="5 6">Expression is induced in the presence of fluconazole (FLC).</text>
</comment>
<comment type="disruption phenotype">
    <text evidence="6">Does not affect the susceptibility to azoles, but displays slightly lower minimum inhibitory concentrations (MICs) to cycloheximide and higher MICs to rhodamine 6G (R-6G) (PubMed:29378705). Causes further increase in susceptibility toward fluconazole and itraconazole, when AFR1 and MDR1 are also deleted (PubMed:29378705).</text>
</comment>
<comment type="similarity">
    <text evidence="8">Belongs to the ABC transporter superfamily. ABCG family. PDR (TC 3.A.1.205) subfamily.</text>
</comment>
<proteinExistence type="evidence at protein level"/>
<gene>
    <name evidence="7" type="primary">AFR2</name>
    <name type="ORF">CNBG_6088</name>
</gene>
<reference key="1">
    <citation type="journal article" date="2011" name="MBio">
        <title>Genome variation in Cryptococcus gattii, an emerging pathogen of immunocompetent hosts.</title>
        <authorList>
            <person name="D'Souza C.A."/>
            <person name="Kronstad J.W."/>
            <person name="Taylor G."/>
            <person name="Warren R."/>
            <person name="Yuen M."/>
            <person name="Hu G."/>
            <person name="Jung W.H."/>
            <person name="Sham A."/>
            <person name="Kidd S.E."/>
            <person name="Tangen K."/>
            <person name="Lee N."/>
            <person name="Zeilmaker T."/>
            <person name="Sawkins J."/>
            <person name="McVicker G."/>
            <person name="Shah S."/>
            <person name="Gnerre S."/>
            <person name="Griggs A."/>
            <person name="Zeng Q."/>
            <person name="Bartlett K."/>
            <person name="Li W."/>
            <person name="Wang X."/>
            <person name="Heitman J."/>
            <person name="Stajich J.E."/>
            <person name="Fraser J.A."/>
            <person name="Meyer W."/>
            <person name="Carter D."/>
            <person name="Schein J."/>
            <person name="Krzywinski M."/>
            <person name="Kwon-Chung K.J."/>
            <person name="Varma A."/>
            <person name="Wang J."/>
            <person name="Brunham R."/>
            <person name="Fyfe M."/>
            <person name="Ouellette B.F.F."/>
            <person name="Siddiqui A."/>
            <person name="Marra M."/>
            <person name="Jones S."/>
            <person name="Holt R."/>
            <person name="Birren B.W."/>
            <person name="Galagan J.E."/>
            <person name="Cuomo C.A."/>
        </authorList>
    </citation>
    <scope>NUCLEOTIDE SEQUENCE [LARGE SCALE GENOMIC DNA]</scope>
    <source>
        <strain>R265</strain>
    </source>
</reference>
<reference key="2">
    <citation type="journal article" date="2015" name="J. Antimicrob. Chemother.">
        <title>Identification and properties of plasma membrane azole efflux pumps from the pathogenic fungi Cryptococcus gattii and Cryptococcus neoformans.</title>
        <authorList>
            <person name="Basso L.R. Jr."/>
            <person name="Gast C.E."/>
            <person name="Bruzual I."/>
            <person name="Wong B."/>
        </authorList>
    </citation>
    <scope>FUNCTION</scope>
    <scope>INDUCTION</scope>
    <scope>CATALYTIC ACTIVITY</scope>
    <scope>SUBSTRATE SPECIFICITY</scope>
    <scope>BIOPHYSICOCHEMICAL PROPERTIES</scope>
    <scope>SUBCELLULAR LOCATION</scope>
</reference>
<reference key="3">
    <citation type="journal article" date="2018" name="Antimicrob. Agents Chemother.">
        <title>Roles of three Cryptococcus neoformans and Cryptococcus gattii efflux pump-coding genes in response to drug treatment.</title>
        <authorList>
            <person name="Chang M."/>
            <person name="Sionov E."/>
            <person name="Khanal Lamichhane A."/>
            <person name="Kwon-Chung K.J."/>
            <person name="Chang Y.C."/>
        </authorList>
    </citation>
    <scope>FUNCTION</scope>
    <scope>DISRUPTION PHENOTYPE</scope>
    <scope>INDUCTION</scope>
</reference>
<name>AFR2_CRYD2</name>
<evidence type="ECO:0000255" key="1"/>
<evidence type="ECO:0000255" key="2">
    <source>
        <dbReference type="PROSITE-ProRule" id="PRU00434"/>
    </source>
</evidence>
<evidence type="ECO:0000255" key="3">
    <source>
        <dbReference type="PROSITE-ProRule" id="PRU00498"/>
    </source>
</evidence>
<evidence type="ECO:0000256" key="4">
    <source>
        <dbReference type="SAM" id="MobiDB-lite"/>
    </source>
</evidence>
<evidence type="ECO:0000269" key="5">
    <source>
    </source>
</evidence>
<evidence type="ECO:0000269" key="6">
    <source>
    </source>
</evidence>
<evidence type="ECO:0000303" key="7">
    <source>
    </source>
</evidence>
<evidence type="ECO:0000305" key="8"/>
<feature type="chain" id="PRO_0000452666" description="ABC multidrug transporter AFR2">
    <location>
        <begin position="1"/>
        <end position="1529"/>
    </location>
</feature>
<feature type="transmembrane region" description="Helical" evidence="1">
    <location>
        <begin position="510"/>
        <end position="530"/>
    </location>
</feature>
<feature type="transmembrane region" description="Helical" evidence="1">
    <location>
        <begin position="539"/>
        <end position="559"/>
    </location>
</feature>
<feature type="transmembrane region" description="Helical" evidence="1">
    <location>
        <begin position="589"/>
        <end position="609"/>
    </location>
</feature>
<feature type="transmembrane region" description="Helical" evidence="1">
    <location>
        <begin position="614"/>
        <end position="634"/>
    </location>
</feature>
<feature type="transmembrane region" description="Helical" evidence="1">
    <location>
        <begin position="648"/>
        <end position="668"/>
    </location>
</feature>
<feature type="transmembrane region" description="Helical" evidence="1">
    <location>
        <begin position="757"/>
        <end position="777"/>
    </location>
</feature>
<feature type="transmembrane region" description="Helical" evidence="1">
    <location>
        <begin position="1193"/>
        <end position="1213"/>
    </location>
</feature>
<feature type="transmembrane region" description="Helical" evidence="1">
    <location>
        <begin position="1229"/>
        <end position="1249"/>
    </location>
</feature>
<feature type="transmembrane region" description="Helical" evidence="1">
    <location>
        <begin position="1268"/>
        <end position="1288"/>
    </location>
</feature>
<feature type="transmembrane region" description="Helical" evidence="1">
    <location>
        <begin position="1314"/>
        <end position="1334"/>
    </location>
</feature>
<feature type="transmembrane region" description="Helical" evidence="1">
    <location>
        <begin position="1353"/>
        <end position="1373"/>
    </location>
</feature>
<feature type="transmembrane region" description="Helical" evidence="1">
    <location>
        <begin position="1465"/>
        <end position="1485"/>
    </location>
</feature>
<feature type="domain" description="ABC transporter 1" evidence="2">
    <location>
        <begin position="144"/>
        <end position="394"/>
    </location>
</feature>
<feature type="domain" description="ABC transporter 2" evidence="2">
    <location>
        <begin position="845"/>
        <end position="1087"/>
    </location>
</feature>
<feature type="region of interest" description="Disordered" evidence="4">
    <location>
        <begin position="1493"/>
        <end position="1529"/>
    </location>
</feature>
<feature type="compositionally biased region" description="Basic and acidic residues" evidence="4">
    <location>
        <begin position="1493"/>
        <end position="1505"/>
    </location>
</feature>
<feature type="compositionally biased region" description="Polar residues" evidence="4">
    <location>
        <begin position="1518"/>
        <end position="1529"/>
    </location>
</feature>
<feature type="binding site" evidence="2">
    <location>
        <begin position="881"/>
        <end position="888"/>
    </location>
    <ligand>
        <name>ATP</name>
        <dbReference type="ChEBI" id="CHEBI:30616"/>
    </ligand>
</feature>
<feature type="glycosylation site" description="N-linked (GlcNAc...) asparagine" evidence="3">
    <location>
        <position position="235"/>
    </location>
</feature>
<feature type="glycosylation site" description="N-linked (GlcNAc...) asparagine" evidence="3">
    <location>
        <position position="318"/>
    </location>
</feature>
<feature type="glycosylation site" description="N-linked (GlcNAc...) asparagine" evidence="3">
    <location>
        <position position="742"/>
    </location>
</feature>
<feature type="glycosylation site" description="N-linked (GlcNAc...) asparagine" evidence="3">
    <location>
        <position position="1434"/>
    </location>
</feature>
<keyword id="KW-0067">ATP-binding</keyword>
<keyword id="KW-1003">Cell membrane</keyword>
<keyword id="KW-0325">Glycoprotein</keyword>
<keyword id="KW-0472">Membrane</keyword>
<keyword id="KW-0547">Nucleotide-binding</keyword>
<keyword id="KW-0677">Repeat</keyword>
<keyword id="KW-0812">Transmembrane</keyword>
<keyword id="KW-1133">Transmembrane helix</keyword>
<keyword id="KW-0813">Transport</keyword>